<name>MCA1B_ASPNC</name>
<accession>A2QU58</accession>
<evidence type="ECO:0000250" key="1"/>
<evidence type="ECO:0000255" key="2"/>
<evidence type="ECO:0000256" key="3">
    <source>
        <dbReference type="SAM" id="MobiDB-lite"/>
    </source>
</evidence>
<evidence type="ECO:0000305" key="4"/>
<organism>
    <name type="scientific">Aspergillus niger (strain ATCC MYA-4892 / CBS 513.88 / FGSC A1513)</name>
    <dbReference type="NCBI Taxonomy" id="425011"/>
    <lineage>
        <taxon>Eukaryota</taxon>
        <taxon>Fungi</taxon>
        <taxon>Dikarya</taxon>
        <taxon>Ascomycota</taxon>
        <taxon>Pezizomycotina</taxon>
        <taxon>Eurotiomycetes</taxon>
        <taxon>Eurotiomycetidae</taxon>
        <taxon>Eurotiales</taxon>
        <taxon>Aspergillaceae</taxon>
        <taxon>Aspergillus</taxon>
        <taxon>Aspergillus subgen. Circumdati</taxon>
    </lineage>
</organism>
<keyword id="KW-0053">Apoptosis</keyword>
<keyword id="KW-0378">Hydrolase</keyword>
<keyword id="KW-0645">Protease</keyword>
<keyword id="KW-1185">Reference proteome</keyword>
<keyword id="KW-0788">Thiol protease</keyword>
<keyword id="KW-0865">Zymogen</keyword>
<sequence length="438" mass="48738">MYYHHSHQGWSGDYPRQQSWGQPPPSSYPYPYSSNAQYQPPPGPPPTSHYAPPPGPPPSHYYPPPGSYPSPAPSPYYGQHHTPTPPPQSSSPHQRSYHNHSPSWGQNLPPRPPQESQHFGRGAPSNYRFQYSNCTGRRKALLIGINYIGQPNQLRGCINDVTNMSTFLNEKYGYRREDMVILTDDQKNPMSIPNKANILRAMQWLVKDAQPNDSLFIHFSGHGGRTPDLDGDEEDGYDDVIYPLDYRTAGHIVDDDMHAIMVRPLRPGVRLTAIFDSCHSGTALDLPYVYSTQGILKEPNLAKEAAMDLFSAINSYGKGDLSSVAQTAIGFFKKAANGDTARQRTVMTKTSPADVVMFSGSKDTQTSADTFQDGEARGALSWAFIKTLQQRPNQSYLQLLNSIRNELEGKYTQKPQLSCSHPLGMCNASLVPPRTEID</sequence>
<feature type="propeptide" id="PRO_0000333626" evidence="2">
    <location>
        <begin position="1"/>
        <end status="unknown"/>
    </location>
</feature>
<feature type="chain" id="PRO_0000333627" description="Metacaspase-1B">
    <location>
        <begin status="unknown"/>
        <end position="438"/>
    </location>
</feature>
<feature type="region of interest" description="Disordered" evidence="3">
    <location>
        <begin position="1"/>
        <end position="125"/>
    </location>
</feature>
<feature type="compositionally biased region" description="Low complexity" evidence="3">
    <location>
        <begin position="29"/>
        <end position="38"/>
    </location>
</feature>
<feature type="compositionally biased region" description="Pro residues" evidence="3">
    <location>
        <begin position="39"/>
        <end position="74"/>
    </location>
</feature>
<feature type="active site" evidence="1">
    <location>
        <position position="222"/>
    </location>
</feature>
<feature type="active site" evidence="1">
    <location>
        <position position="278"/>
    </location>
</feature>
<proteinExistence type="inferred from homology"/>
<protein>
    <recommendedName>
        <fullName>Metacaspase-1B</fullName>
        <ecNumber>3.4.22.-</ecNumber>
    </recommendedName>
</protein>
<reference key="1">
    <citation type="journal article" date="2007" name="Nat. Biotechnol.">
        <title>Genome sequencing and analysis of the versatile cell factory Aspergillus niger CBS 513.88.</title>
        <authorList>
            <person name="Pel H.J."/>
            <person name="de Winde J.H."/>
            <person name="Archer D.B."/>
            <person name="Dyer P.S."/>
            <person name="Hofmann G."/>
            <person name="Schaap P.J."/>
            <person name="Turner G."/>
            <person name="de Vries R.P."/>
            <person name="Albang R."/>
            <person name="Albermann K."/>
            <person name="Andersen M.R."/>
            <person name="Bendtsen J.D."/>
            <person name="Benen J.A.E."/>
            <person name="van den Berg M."/>
            <person name="Breestraat S."/>
            <person name="Caddick M.X."/>
            <person name="Contreras R."/>
            <person name="Cornell M."/>
            <person name="Coutinho P.M."/>
            <person name="Danchin E.G.J."/>
            <person name="Debets A.J.M."/>
            <person name="Dekker P."/>
            <person name="van Dijck P.W.M."/>
            <person name="van Dijk A."/>
            <person name="Dijkhuizen L."/>
            <person name="Driessen A.J.M."/>
            <person name="d'Enfert C."/>
            <person name="Geysens S."/>
            <person name="Goosen C."/>
            <person name="Groot G.S.P."/>
            <person name="de Groot P.W.J."/>
            <person name="Guillemette T."/>
            <person name="Henrissat B."/>
            <person name="Herweijer M."/>
            <person name="van den Hombergh J.P.T.W."/>
            <person name="van den Hondel C.A.M.J.J."/>
            <person name="van der Heijden R.T.J.M."/>
            <person name="van der Kaaij R.M."/>
            <person name="Klis F.M."/>
            <person name="Kools H.J."/>
            <person name="Kubicek C.P."/>
            <person name="van Kuyk P.A."/>
            <person name="Lauber J."/>
            <person name="Lu X."/>
            <person name="van der Maarel M.J.E.C."/>
            <person name="Meulenberg R."/>
            <person name="Menke H."/>
            <person name="Mortimer M.A."/>
            <person name="Nielsen J."/>
            <person name="Oliver S.G."/>
            <person name="Olsthoorn M."/>
            <person name="Pal K."/>
            <person name="van Peij N.N.M.E."/>
            <person name="Ram A.F.J."/>
            <person name="Rinas U."/>
            <person name="Roubos J.A."/>
            <person name="Sagt C.M.J."/>
            <person name="Schmoll M."/>
            <person name="Sun J."/>
            <person name="Ussery D."/>
            <person name="Varga J."/>
            <person name="Vervecken W."/>
            <person name="van de Vondervoort P.J.J."/>
            <person name="Wedler H."/>
            <person name="Woesten H.A.B."/>
            <person name="Zeng A.-P."/>
            <person name="van Ooyen A.J.J."/>
            <person name="Visser J."/>
            <person name="Stam H."/>
        </authorList>
    </citation>
    <scope>NUCLEOTIDE SEQUENCE [LARGE SCALE GENOMIC DNA]</scope>
    <source>
        <strain>ATCC MYA-4892 / CBS 513.88 / FGSC A1513</strain>
    </source>
</reference>
<dbReference type="EC" id="3.4.22.-"/>
<dbReference type="EMBL" id="AM270200">
    <property type="protein sequence ID" value="CAK40301.1"/>
    <property type="molecule type" value="Genomic_DNA"/>
</dbReference>
<dbReference type="RefSeq" id="XP_001393760.2">
    <property type="nucleotide sequence ID" value="XM_001393723.2"/>
</dbReference>
<dbReference type="SMR" id="A2QU58"/>
<dbReference type="EnsemblFungi" id="CAK40301">
    <property type="protein sequence ID" value="CAK40301"/>
    <property type="gene ID" value="An09g04470"/>
</dbReference>
<dbReference type="GeneID" id="4983981"/>
<dbReference type="KEGG" id="ang:An09g04470"/>
<dbReference type="HOGENOM" id="CLU_029389_0_2_1"/>
<dbReference type="Proteomes" id="UP000006706">
    <property type="component" value="Chromosome 1L"/>
</dbReference>
<dbReference type="GO" id="GO:0005737">
    <property type="term" value="C:cytoplasm"/>
    <property type="evidence" value="ECO:0007669"/>
    <property type="project" value="TreeGrafter"/>
</dbReference>
<dbReference type="GO" id="GO:0004197">
    <property type="term" value="F:cysteine-type endopeptidase activity"/>
    <property type="evidence" value="ECO:0007669"/>
    <property type="project" value="InterPro"/>
</dbReference>
<dbReference type="GO" id="GO:0006915">
    <property type="term" value="P:apoptotic process"/>
    <property type="evidence" value="ECO:0007669"/>
    <property type="project" value="UniProtKB-KW"/>
</dbReference>
<dbReference type="GO" id="GO:0006508">
    <property type="term" value="P:proteolysis"/>
    <property type="evidence" value="ECO:0007669"/>
    <property type="project" value="UniProtKB-KW"/>
</dbReference>
<dbReference type="Gene3D" id="3.40.50.12660">
    <property type="match status" value="1"/>
</dbReference>
<dbReference type="InterPro" id="IPR029030">
    <property type="entry name" value="Caspase-like_dom_sf"/>
</dbReference>
<dbReference type="InterPro" id="IPR050452">
    <property type="entry name" value="Metacaspase"/>
</dbReference>
<dbReference type="InterPro" id="IPR011600">
    <property type="entry name" value="Pept_C14_caspase"/>
</dbReference>
<dbReference type="PANTHER" id="PTHR48104:SF23">
    <property type="entry name" value="METACASPASE (EUROFUNG)"/>
    <property type="match status" value="1"/>
</dbReference>
<dbReference type="PANTHER" id="PTHR48104">
    <property type="entry name" value="METACASPASE-4"/>
    <property type="match status" value="1"/>
</dbReference>
<dbReference type="Pfam" id="PF00656">
    <property type="entry name" value="Peptidase_C14"/>
    <property type="match status" value="1"/>
</dbReference>
<dbReference type="SUPFAM" id="SSF52129">
    <property type="entry name" value="Caspase-like"/>
    <property type="match status" value="1"/>
</dbReference>
<comment type="function">
    <text evidence="1">Involved in cell death (apoptosis).</text>
</comment>
<comment type="similarity">
    <text evidence="4">Belongs to the peptidase C14B family.</text>
</comment>
<gene>
    <name type="primary">casB</name>
    <name type="ORF">An09g04470</name>
</gene>